<sequence length="156" mass="17455">MPRKGPAPKRPVIIDPVYSSPLVTSLINKILLDGKRSTAERIVYGAMEGLREKTGNDPVITLKRALENVKPSLEVKSRRVGGATYQVPIEVKPGRASTLALRWLVGYSRARREKTMTERLMNELLDASNGLGASVKKREDTHKMAESNKAFAHYRW</sequence>
<keyword id="KW-0687">Ribonucleoprotein</keyword>
<keyword id="KW-0689">Ribosomal protein</keyword>
<keyword id="KW-0694">RNA-binding</keyword>
<keyword id="KW-0699">rRNA-binding</keyword>
<keyword id="KW-0820">tRNA-binding</keyword>
<feature type="chain" id="PRO_1000126005" description="Small ribosomal subunit protein uS7">
    <location>
        <begin position="1"/>
        <end position="156"/>
    </location>
</feature>
<gene>
    <name evidence="1" type="primary">rpsG</name>
    <name type="ordered locus">SGR_2845</name>
</gene>
<proteinExistence type="inferred from homology"/>
<protein>
    <recommendedName>
        <fullName evidence="1">Small ribosomal subunit protein uS7</fullName>
    </recommendedName>
    <alternativeName>
        <fullName evidence="2">30S ribosomal protein S7</fullName>
    </alternativeName>
</protein>
<organism>
    <name type="scientific">Streptomyces griseus subsp. griseus (strain JCM 4626 / CBS 651.72 / NBRC 13350 / KCC S-0626 / ISP 5235)</name>
    <dbReference type="NCBI Taxonomy" id="455632"/>
    <lineage>
        <taxon>Bacteria</taxon>
        <taxon>Bacillati</taxon>
        <taxon>Actinomycetota</taxon>
        <taxon>Actinomycetes</taxon>
        <taxon>Kitasatosporales</taxon>
        <taxon>Streptomycetaceae</taxon>
        <taxon>Streptomyces</taxon>
    </lineage>
</organism>
<name>RS7_STRGG</name>
<reference key="1">
    <citation type="journal article" date="2008" name="J. Bacteriol.">
        <title>Genome sequence of the streptomycin-producing microorganism Streptomyces griseus IFO 13350.</title>
        <authorList>
            <person name="Ohnishi Y."/>
            <person name="Ishikawa J."/>
            <person name="Hara H."/>
            <person name="Suzuki H."/>
            <person name="Ikenoya M."/>
            <person name="Ikeda H."/>
            <person name="Yamashita A."/>
            <person name="Hattori M."/>
            <person name="Horinouchi S."/>
        </authorList>
    </citation>
    <scope>NUCLEOTIDE SEQUENCE [LARGE SCALE GENOMIC DNA]</scope>
    <source>
        <strain>JCM 4626 / CBS 651.72 / NBRC 13350 / KCC S-0626 / ISP 5235</strain>
    </source>
</reference>
<evidence type="ECO:0000255" key="1">
    <source>
        <dbReference type="HAMAP-Rule" id="MF_00480"/>
    </source>
</evidence>
<evidence type="ECO:0000305" key="2"/>
<dbReference type="EMBL" id="AP009493">
    <property type="protein sequence ID" value="BAG19674.1"/>
    <property type="molecule type" value="Genomic_DNA"/>
</dbReference>
<dbReference type="RefSeq" id="WP_003966970.1">
    <property type="nucleotide sequence ID" value="NC_010572.1"/>
</dbReference>
<dbReference type="SMR" id="B1W418"/>
<dbReference type="GeneID" id="97760362"/>
<dbReference type="KEGG" id="sgr:SGR_2845"/>
<dbReference type="eggNOG" id="COG0049">
    <property type="taxonomic scope" value="Bacteria"/>
</dbReference>
<dbReference type="HOGENOM" id="CLU_072226_1_1_11"/>
<dbReference type="Proteomes" id="UP000001685">
    <property type="component" value="Chromosome"/>
</dbReference>
<dbReference type="GO" id="GO:0015935">
    <property type="term" value="C:small ribosomal subunit"/>
    <property type="evidence" value="ECO:0007669"/>
    <property type="project" value="InterPro"/>
</dbReference>
<dbReference type="GO" id="GO:0019843">
    <property type="term" value="F:rRNA binding"/>
    <property type="evidence" value="ECO:0007669"/>
    <property type="project" value="UniProtKB-UniRule"/>
</dbReference>
<dbReference type="GO" id="GO:0003735">
    <property type="term" value="F:structural constituent of ribosome"/>
    <property type="evidence" value="ECO:0007669"/>
    <property type="project" value="InterPro"/>
</dbReference>
<dbReference type="GO" id="GO:0000049">
    <property type="term" value="F:tRNA binding"/>
    <property type="evidence" value="ECO:0007669"/>
    <property type="project" value="UniProtKB-UniRule"/>
</dbReference>
<dbReference type="GO" id="GO:0006412">
    <property type="term" value="P:translation"/>
    <property type="evidence" value="ECO:0007669"/>
    <property type="project" value="UniProtKB-UniRule"/>
</dbReference>
<dbReference type="CDD" id="cd14869">
    <property type="entry name" value="uS7_Bacteria"/>
    <property type="match status" value="1"/>
</dbReference>
<dbReference type="FunFam" id="1.10.455.10:FF:000001">
    <property type="entry name" value="30S ribosomal protein S7"/>
    <property type="match status" value="1"/>
</dbReference>
<dbReference type="Gene3D" id="1.10.455.10">
    <property type="entry name" value="Ribosomal protein S7 domain"/>
    <property type="match status" value="1"/>
</dbReference>
<dbReference type="HAMAP" id="MF_00480_B">
    <property type="entry name" value="Ribosomal_uS7_B"/>
    <property type="match status" value="1"/>
</dbReference>
<dbReference type="InterPro" id="IPR000235">
    <property type="entry name" value="Ribosomal_uS7"/>
</dbReference>
<dbReference type="InterPro" id="IPR005717">
    <property type="entry name" value="Ribosomal_uS7_bac/org-type"/>
</dbReference>
<dbReference type="InterPro" id="IPR020606">
    <property type="entry name" value="Ribosomal_uS7_CS"/>
</dbReference>
<dbReference type="InterPro" id="IPR023798">
    <property type="entry name" value="Ribosomal_uS7_dom"/>
</dbReference>
<dbReference type="InterPro" id="IPR036823">
    <property type="entry name" value="Ribosomal_uS7_dom_sf"/>
</dbReference>
<dbReference type="NCBIfam" id="TIGR01029">
    <property type="entry name" value="rpsG_bact"/>
    <property type="match status" value="1"/>
</dbReference>
<dbReference type="PANTHER" id="PTHR11205">
    <property type="entry name" value="RIBOSOMAL PROTEIN S7"/>
    <property type="match status" value="1"/>
</dbReference>
<dbReference type="Pfam" id="PF00177">
    <property type="entry name" value="Ribosomal_S7"/>
    <property type="match status" value="1"/>
</dbReference>
<dbReference type="PIRSF" id="PIRSF002122">
    <property type="entry name" value="RPS7p_RPS7a_RPS5e_RPS7o"/>
    <property type="match status" value="1"/>
</dbReference>
<dbReference type="SUPFAM" id="SSF47973">
    <property type="entry name" value="Ribosomal protein S7"/>
    <property type="match status" value="1"/>
</dbReference>
<dbReference type="PROSITE" id="PS00052">
    <property type="entry name" value="RIBOSOMAL_S7"/>
    <property type="match status" value="1"/>
</dbReference>
<comment type="function">
    <text evidence="1">One of the primary rRNA binding proteins, it binds directly to 16S rRNA where it nucleates assembly of the head domain of the 30S subunit. Is located at the subunit interface close to the decoding center, probably blocks exit of the E-site tRNA.</text>
</comment>
<comment type="subunit">
    <text evidence="1">Part of the 30S ribosomal subunit. Contacts proteins S9 and S11.</text>
</comment>
<comment type="similarity">
    <text evidence="1">Belongs to the universal ribosomal protein uS7 family.</text>
</comment>
<accession>B1W418</accession>